<sequence length="64" mass="7267">MNAKEMRGKEAAELKQELESLLRAHFALRMQVATQQSNKTADLGKLRRDIARVKTIMREKAGQA</sequence>
<organism>
    <name type="scientific">Thiobacillus denitrificans (strain ATCC 25259 / T1)</name>
    <dbReference type="NCBI Taxonomy" id="292415"/>
    <lineage>
        <taxon>Bacteria</taxon>
        <taxon>Pseudomonadati</taxon>
        <taxon>Pseudomonadota</taxon>
        <taxon>Betaproteobacteria</taxon>
        <taxon>Nitrosomonadales</taxon>
        <taxon>Thiobacillaceae</taxon>
        <taxon>Thiobacillus</taxon>
    </lineage>
</organism>
<evidence type="ECO:0000255" key="1">
    <source>
        <dbReference type="HAMAP-Rule" id="MF_00374"/>
    </source>
</evidence>
<evidence type="ECO:0000305" key="2"/>
<name>RL29_THIDA</name>
<comment type="similarity">
    <text evidence="1">Belongs to the universal ribosomal protein uL29 family.</text>
</comment>
<dbReference type="EMBL" id="CP000116">
    <property type="protein sequence ID" value="AAZ96366.1"/>
    <property type="molecule type" value="Genomic_DNA"/>
</dbReference>
<dbReference type="RefSeq" id="WP_011310925.1">
    <property type="nucleotide sequence ID" value="NC_007404.1"/>
</dbReference>
<dbReference type="SMR" id="Q3SLP1"/>
<dbReference type="STRING" id="292415.Tbd_0413"/>
<dbReference type="KEGG" id="tbd:Tbd_0413"/>
<dbReference type="eggNOG" id="COG0255">
    <property type="taxonomic scope" value="Bacteria"/>
</dbReference>
<dbReference type="HOGENOM" id="CLU_158491_1_1_4"/>
<dbReference type="OrthoDB" id="9815192at2"/>
<dbReference type="Proteomes" id="UP000008291">
    <property type="component" value="Chromosome"/>
</dbReference>
<dbReference type="GO" id="GO:0022625">
    <property type="term" value="C:cytosolic large ribosomal subunit"/>
    <property type="evidence" value="ECO:0007669"/>
    <property type="project" value="TreeGrafter"/>
</dbReference>
<dbReference type="GO" id="GO:0003735">
    <property type="term" value="F:structural constituent of ribosome"/>
    <property type="evidence" value="ECO:0007669"/>
    <property type="project" value="InterPro"/>
</dbReference>
<dbReference type="GO" id="GO:0006412">
    <property type="term" value="P:translation"/>
    <property type="evidence" value="ECO:0007669"/>
    <property type="project" value="UniProtKB-UniRule"/>
</dbReference>
<dbReference type="CDD" id="cd00427">
    <property type="entry name" value="Ribosomal_L29_HIP"/>
    <property type="match status" value="1"/>
</dbReference>
<dbReference type="FunFam" id="1.10.287.310:FF:000001">
    <property type="entry name" value="50S ribosomal protein L29"/>
    <property type="match status" value="1"/>
</dbReference>
<dbReference type="Gene3D" id="1.10.287.310">
    <property type="match status" value="1"/>
</dbReference>
<dbReference type="HAMAP" id="MF_00374">
    <property type="entry name" value="Ribosomal_uL29"/>
    <property type="match status" value="1"/>
</dbReference>
<dbReference type="InterPro" id="IPR050063">
    <property type="entry name" value="Ribosomal_protein_uL29"/>
</dbReference>
<dbReference type="InterPro" id="IPR001854">
    <property type="entry name" value="Ribosomal_uL29"/>
</dbReference>
<dbReference type="InterPro" id="IPR018254">
    <property type="entry name" value="Ribosomal_uL29_CS"/>
</dbReference>
<dbReference type="InterPro" id="IPR036049">
    <property type="entry name" value="Ribosomal_uL29_sf"/>
</dbReference>
<dbReference type="NCBIfam" id="TIGR00012">
    <property type="entry name" value="L29"/>
    <property type="match status" value="1"/>
</dbReference>
<dbReference type="PANTHER" id="PTHR10916">
    <property type="entry name" value="60S RIBOSOMAL PROTEIN L35/50S RIBOSOMAL PROTEIN L29"/>
    <property type="match status" value="1"/>
</dbReference>
<dbReference type="PANTHER" id="PTHR10916:SF0">
    <property type="entry name" value="LARGE RIBOSOMAL SUBUNIT PROTEIN UL29C"/>
    <property type="match status" value="1"/>
</dbReference>
<dbReference type="Pfam" id="PF00831">
    <property type="entry name" value="Ribosomal_L29"/>
    <property type="match status" value="1"/>
</dbReference>
<dbReference type="SUPFAM" id="SSF46561">
    <property type="entry name" value="Ribosomal protein L29 (L29p)"/>
    <property type="match status" value="1"/>
</dbReference>
<dbReference type="PROSITE" id="PS00579">
    <property type="entry name" value="RIBOSOMAL_L29"/>
    <property type="match status" value="1"/>
</dbReference>
<keyword id="KW-1185">Reference proteome</keyword>
<keyword id="KW-0687">Ribonucleoprotein</keyword>
<keyword id="KW-0689">Ribosomal protein</keyword>
<reference key="1">
    <citation type="journal article" date="2006" name="J. Bacteriol.">
        <title>The genome sequence of the obligately chemolithoautotrophic, facultatively anaerobic bacterium Thiobacillus denitrificans.</title>
        <authorList>
            <person name="Beller H.R."/>
            <person name="Chain P.S."/>
            <person name="Letain T.E."/>
            <person name="Chakicherla A."/>
            <person name="Larimer F.W."/>
            <person name="Richardson P.M."/>
            <person name="Coleman M.A."/>
            <person name="Wood A.P."/>
            <person name="Kelly D.P."/>
        </authorList>
    </citation>
    <scope>NUCLEOTIDE SEQUENCE [LARGE SCALE GENOMIC DNA]</scope>
    <source>
        <strain>ATCC 25259 / T1</strain>
    </source>
</reference>
<protein>
    <recommendedName>
        <fullName evidence="1">Large ribosomal subunit protein uL29</fullName>
    </recommendedName>
    <alternativeName>
        <fullName evidence="2">50S ribosomal protein L29</fullName>
    </alternativeName>
</protein>
<proteinExistence type="inferred from homology"/>
<accession>Q3SLP1</accession>
<gene>
    <name evidence="1" type="primary">rpmC</name>
    <name type="ordered locus">Tbd_0413</name>
</gene>
<feature type="chain" id="PRO_1000007647" description="Large ribosomal subunit protein uL29">
    <location>
        <begin position="1"/>
        <end position="64"/>
    </location>
</feature>